<gene>
    <name evidence="1" type="primary">ihfB</name>
    <name evidence="1" type="synonym">himD</name>
    <name type="ordered locus">SNSL254_A1015</name>
</gene>
<reference key="1">
    <citation type="journal article" date="2011" name="J. Bacteriol.">
        <title>Comparative genomics of 28 Salmonella enterica isolates: evidence for CRISPR-mediated adaptive sublineage evolution.</title>
        <authorList>
            <person name="Fricke W.F."/>
            <person name="Mammel M.K."/>
            <person name="McDermott P.F."/>
            <person name="Tartera C."/>
            <person name="White D.G."/>
            <person name="Leclerc J.E."/>
            <person name="Ravel J."/>
            <person name="Cebula T.A."/>
        </authorList>
    </citation>
    <scope>NUCLEOTIDE SEQUENCE [LARGE SCALE GENOMIC DNA]</scope>
    <source>
        <strain>SL254</strain>
    </source>
</reference>
<feature type="chain" id="PRO_1000122240" description="Integration host factor subunit beta">
    <location>
        <begin position="1"/>
        <end position="94"/>
    </location>
</feature>
<dbReference type="EMBL" id="CP001113">
    <property type="protein sequence ID" value="ACF61601.1"/>
    <property type="molecule type" value="Genomic_DNA"/>
</dbReference>
<dbReference type="RefSeq" id="WP_000167332.1">
    <property type="nucleotide sequence ID" value="NZ_CCMR01000003.1"/>
</dbReference>
<dbReference type="SMR" id="B4T146"/>
<dbReference type="GeneID" id="84237116"/>
<dbReference type="KEGG" id="see:SNSL254_A1015"/>
<dbReference type="HOGENOM" id="CLU_105066_2_0_6"/>
<dbReference type="Proteomes" id="UP000008824">
    <property type="component" value="Chromosome"/>
</dbReference>
<dbReference type="GO" id="GO:0005694">
    <property type="term" value="C:chromosome"/>
    <property type="evidence" value="ECO:0007669"/>
    <property type="project" value="InterPro"/>
</dbReference>
<dbReference type="GO" id="GO:0005829">
    <property type="term" value="C:cytosol"/>
    <property type="evidence" value="ECO:0007669"/>
    <property type="project" value="TreeGrafter"/>
</dbReference>
<dbReference type="GO" id="GO:0003677">
    <property type="term" value="F:DNA binding"/>
    <property type="evidence" value="ECO:0007669"/>
    <property type="project" value="UniProtKB-UniRule"/>
</dbReference>
<dbReference type="GO" id="GO:0030527">
    <property type="term" value="F:structural constituent of chromatin"/>
    <property type="evidence" value="ECO:0007669"/>
    <property type="project" value="InterPro"/>
</dbReference>
<dbReference type="GO" id="GO:0006310">
    <property type="term" value="P:DNA recombination"/>
    <property type="evidence" value="ECO:0007669"/>
    <property type="project" value="UniProtKB-UniRule"/>
</dbReference>
<dbReference type="GO" id="GO:0006355">
    <property type="term" value="P:regulation of DNA-templated transcription"/>
    <property type="evidence" value="ECO:0007669"/>
    <property type="project" value="UniProtKB-UniRule"/>
</dbReference>
<dbReference type="GO" id="GO:0006417">
    <property type="term" value="P:regulation of translation"/>
    <property type="evidence" value="ECO:0007669"/>
    <property type="project" value="UniProtKB-UniRule"/>
</dbReference>
<dbReference type="CDD" id="cd13836">
    <property type="entry name" value="IHF_B"/>
    <property type="match status" value="1"/>
</dbReference>
<dbReference type="FunFam" id="4.10.520.10:FF:000003">
    <property type="entry name" value="Integration host factor subunit beta"/>
    <property type="match status" value="1"/>
</dbReference>
<dbReference type="Gene3D" id="4.10.520.10">
    <property type="entry name" value="IHF-like DNA-binding proteins"/>
    <property type="match status" value="1"/>
</dbReference>
<dbReference type="HAMAP" id="MF_00381">
    <property type="entry name" value="IHF_beta"/>
    <property type="match status" value="1"/>
</dbReference>
<dbReference type="InterPro" id="IPR000119">
    <property type="entry name" value="Hist_DNA-bd"/>
</dbReference>
<dbReference type="InterPro" id="IPR020816">
    <property type="entry name" value="Histone-like_DNA-bd_CS"/>
</dbReference>
<dbReference type="InterPro" id="IPR010992">
    <property type="entry name" value="IHF-like_DNA-bd_dom_sf"/>
</dbReference>
<dbReference type="InterPro" id="IPR005685">
    <property type="entry name" value="IHF_beta"/>
</dbReference>
<dbReference type="NCBIfam" id="TIGR00988">
    <property type="entry name" value="hip"/>
    <property type="match status" value="1"/>
</dbReference>
<dbReference type="NCBIfam" id="NF001222">
    <property type="entry name" value="PRK00199.1"/>
    <property type="match status" value="1"/>
</dbReference>
<dbReference type="PANTHER" id="PTHR33175">
    <property type="entry name" value="DNA-BINDING PROTEIN HU"/>
    <property type="match status" value="1"/>
</dbReference>
<dbReference type="PANTHER" id="PTHR33175:SF5">
    <property type="entry name" value="INTEGRATION HOST FACTOR SUBUNIT BETA"/>
    <property type="match status" value="1"/>
</dbReference>
<dbReference type="Pfam" id="PF00216">
    <property type="entry name" value="Bac_DNA_binding"/>
    <property type="match status" value="1"/>
</dbReference>
<dbReference type="PRINTS" id="PR01727">
    <property type="entry name" value="DNABINDINGHU"/>
</dbReference>
<dbReference type="SMART" id="SM00411">
    <property type="entry name" value="BHL"/>
    <property type="match status" value="1"/>
</dbReference>
<dbReference type="SUPFAM" id="SSF47729">
    <property type="entry name" value="IHF-like DNA-binding proteins"/>
    <property type="match status" value="1"/>
</dbReference>
<dbReference type="PROSITE" id="PS00045">
    <property type="entry name" value="HISTONE_LIKE"/>
    <property type="match status" value="1"/>
</dbReference>
<evidence type="ECO:0000255" key="1">
    <source>
        <dbReference type="HAMAP-Rule" id="MF_00381"/>
    </source>
</evidence>
<protein>
    <recommendedName>
        <fullName evidence="1">Integration host factor subunit beta</fullName>
        <shortName evidence="1">IHF-beta</shortName>
    </recommendedName>
</protein>
<name>IHFB_SALNS</name>
<organism>
    <name type="scientific">Salmonella newport (strain SL254)</name>
    <dbReference type="NCBI Taxonomy" id="423368"/>
    <lineage>
        <taxon>Bacteria</taxon>
        <taxon>Pseudomonadati</taxon>
        <taxon>Pseudomonadota</taxon>
        <taxon>Gammaproteobacteria</taxon>
        <taxon>Enterobacterales</taxon>
        <taxon>Enterobacteriaceae</taxon>
        <taxon>Salmonella</taxon>
    </lineage>
</organism>
<sequence>MTKSELIERLATQQSHIPAKAVEDAVKEMLEHMASTLAQGERIEIRGFGSFSLHYRAPRTGRNPKTGDKVELEGKYVPHFKPGKELRDRANIYG</sequence>
<keyword id="KW-0233">DNA recombination</keyword>
<keyword id="KW-0238">DNA-binding</keyword>
<keyword id="KW-0804">Transcription</keyword>
<keyword id="KW-0805">Transcription regulation</keyword>
<keyword id="KW-0810">Translation regulation</keyword>
<proteinExistence type="inferred from homology"/>
<accession>B4T146</accession>
<comment type="function">
    <text evidence="1">This protein is one of the two subunits of integration host factor, a specific DNA-binding protein that functions in genetic recombination as well as in transcriptional and translational control.</text>
</comment>
<comment type="subunit">
    <text evidence="1">Heterodimer of an alpha and a beta chain.</text>
</comment>
<comment type="similarity">
    <text evidence="1">Belongs to the bacterial histone-like protein family.</text>
</comment>